<accession>A3NR98</accession>
<reference key="1">
    <citation type="journal article" date="2010" name="Genome Biol. Evol.">
        <title>Continuing evolution of Burkholderia mallei through genome reduction and large-scale rearrangements.</title>
        <authorList>
            <person name="Losada L."/>
            <person name="Ronning C.M."/>
            <person name="DeShazer D."/>
            <person name="Woods D."/>
            <person name="Fedorova N."/>
            <person name="Kim H.S."/>
            <person name="Shabalina S.A."/>
            <person name="Pearson T.R."/>
            <person name="Brinkac L."/>
            <person name="Tan P."/>
            <person name="Nandi T."/>
            <person name="Crabtree J."/>
            <person name="Badger J."/>
            <person name="Beckstrom-Sternberg S."/>
            <person name="Saqib M."/>
            <person name="Schutzer S.E."/>
            <person name="Keim P."/>
            <person name="Nierman W.C."/>
        </authorList>
    </citation>
    <scope>NUCLEOTIDE SEQUENCE [LARGE SCALE GENOMIC DNA]</scope>
    <source>
        <strain>1106a</strain>
    </source>
</reference>
<organism>
    <name type="scientific">Burkholderia pseudomallei (strain 1106a)</name>
    <dbReference type="NCBI Taxonomy" id="357348"/>
    <lineage>
        <taxon>Bacteria</taxon>
        <taxon>Pseudomonadati</taxon>
        <taxon>Pseudomonadota</taxon>
        <taxon>Betaproteobacteria</taxon>
        <taxon>Burkholderiales</taxon>
        <taxon>Burkholderiaceae</taxon>
        <taxon>Burkholderia</taxon>
        <taxon>pseudomallei group</taxon>
    </lineage>
</organism>
<proteinExistence type="inferred from homology"/>
<gene>
    <name evidence="1" type="primary">ispE</name>
    <name type="ordered locus">BURPS1106A_0587</name>
</gene>
<evidence type="ECO:0000255" key="1">
    <source>
        <dbReference type="HAMAP-Rule" id="MF_00061"/>
    </source>
</evidence>
<keyword id="KW-0067">ATP-binding</keyword>
<keyword id="KW-0414">Isoprene biosynthesis</keyword>
<keyword id="KW-0418">Kinase</keyword>
<keyword id="KW-0547">Nucleotide-binding</keyword>
<keyword id="KW-0808">Transferase</keyword>
<sequence>MTDTTRSLRDCLAPAKLNLFLHITGRRPDGYHALQSVFQLLDWGDRLHFTLRDDGKVSRVTDVPGVPEESDLVVRAASLLKAHAGATLGVDIEIDKRLPMGAGLGGGSSDAATTLLALNRLWRLDLPRTTLQSLAVKLGADVPFFVFGKNAFAEGIGEALQAVELPARWFLVVTPRVHVPTAAIFSEKSLTRDSKPITITDFLAQRGIDAGWPDSFGRNDMQPVVTSKYAEVAKVVEWFYNLTPARMTGSGASVFAAFKSKADAEAAQAKLPAGWNSAVAESMSEHPLFAFAS</sequence>
<feature type="chain" id="PRO_1000007823" description="4-diphosphocytidyl-2-C-methyl-D-erythritol kinase">
    <location>
        <begin position="1"/>
        <end position="293"/>
    </location>
</feature>
<feature type="active site" evidence="1">
    <location>
        <position position="16"/>
    </location>
</feature>
<feature type="active site" evidence="1">
    <location>
        <position position="141"/>
    </location>
</feature>
<feature type="binding site" evidence="1">
    <location>
        <begin position="99"/>
        <end position="109"/>
    </location>
    <ligand>
        <name>ATP</name>
        <dbReference type="ChEBI" id="CHEBI:30616"/>
    </ligand>
</feature>
<protein>
    <recommendedName>
        <fullName evidence="1">4-diphosphocytidyl-2-C-methyl-D-erythritol kinase</fullName>
        <shortName evidence="1">CMK</shortName>
        <ecNumber evidence="1">2.7.1.148</ecNumber>
    </recommendedName>
    <alternativeName>
        <fullName evidence="1">4-(cytidine-5'-diphospho)-2-C-methyl-D-erythritol kinase</fullName>
    </alternativeName>
</protein>
<dbReference type="EC" id="2.7.1.148" evidence="1"/>
<dbReference type="EMBL" id="CP000572">
    <property type="protein sequence ID" value="ABN89701.1"/>
    <property type="molecule type" value="Genomic_DNA"/>
</dbReference>
<dbReference type="RefSeq" id="WP_004195241.1">
    <property type="nucleotide sequence ID" value="NC_009076.1"/>
</dbReference>
<dbReference type="SMR" id="A3NR98"/>
<dbReference type="GeneID" id="93059044"/>
<dbReference type="KEGG" id="bpl:BURPS1106A_0587"/>
<dbReference type="HOGENOM" id="CLU_053057_3_0_4"/>
<dbReference type="UniPathway" id="UPA00056">
    <property type="reaction ID" value="UER00094"/>
</dbReference>
<dbReference type="Proteomes" id="UP000006738">
    <property type="component" value="Chromosome I"/>
</dbReference>
<dbReference type="GO" id="GO:0050515">
    <property type="term" value="F:4-(cytidine 5'-diphospho)-2-C-methyl-D-erythritol kinase activity"/>
    <property type="evidence" value="ECO:0007669"/>
    <property type="project" value="UniProtKB-UniRule"/>
</dbReference>
<dbReference type="GO" id="GO:0005524">
    <property type="term" value="F:ATP binding"/>
    <property type="evidence" value="ECO:0007669"/>
    <property type="project" value="UniProtKB-UniRule"/>
</dbReference>
<dbReference type="GO" id="GO:0019288">
    <property type="term" value="P:isopentenyl diphosphate biosynthetic process, methylerythritol 4-phosphate pathway"/>
    <property type="evidence" value="ECO:0007669"/>
    <property type="project" value="UniProtKB-UniRule"/>
</dbReference>
<dbReference type="GO" id="GO:0016114">
    <property type="term" value="P:terpenoid biosynthetic process"/>
    <property type="evidence" value="ECO:0007669"/>
    <property type="project" value="InterPro"/>
</dbReference>
<dbReference type="Gene3D" id="3.30.230.10">
    <property type="match status" value="1"/>
</dbReference>
<dbReference type="Gene3D" id="3.30.70.890">
    <property type="entry name" value="GHMP kinase, C-terminal domain"/>
    <property type="match status" value="1"/>
</dbReference>
<dbReference type="HAMAP" id="MF_00061">
    <property type="entry name" value="IspE"/>
    <property type="match status" value="1"/>
</dbReference>
<dbReference type="InterPro" id="IPR013750">
    <property type="entry name" value="GHMP_kinase_C_dom"/>
</dbReference>
<dbReference type="InterPro" id="IPR036554">
    <property type="entry name" value="GHMP_kinase_C_sf"/>
</dbReference>
<dbReference type="InterPro" id="IPR006204">
    <property type="entry name" value="GHMP_kinase_N_dom"/>
</dbReference>
<dbReference type="InterPro" id="IPR004424">
    <property type="entry name" value="IspE"/>
</dbReference>
<dbReference type="InterPro" id="IPR020568">
    <property type="entry name" value="Ribosomal_Su5_D2-typ_SF"/>
</dbReference>
<dbReference type="InterPro" id="IPR014721">
    <property type="entry name" value="Ribsml_uS5_D2-typ_fold_subgr"/>
</dbReference>
<dbReference type="NCBIfam" id="TIGR00154">
    <property type="entry name" value="ispE"/>
    <property type="match status" value="1"/>
</dbReference>
<dbReference type="NCBIfam" id="NF011202">
    <property type="entry name" value="PRK14608.1"/>
    <property type="match status" value="1"/>
</dbReference>
<dbReference type="PANTHER" id="PTHR43527">
    <property type="entry name" value="4-DIPHOSPHOCYTIDYL-2-C-METHYL-D-ERYTHRITOL KINASE, CHLOROPLASTIC"/>
    <property type="match status" value="1"/>
</dbReference>
<dbReference type="PANTHER" id="PTHR43527:SF2">
    <property type="entry name" value="4-DIPHOSPHOCYTIDYL-2-C-METHYL-D-ERYTHRITOL KINASE, CHLOROPLASTIC"/>
    <property type="match status" value="1"/>
</dbReference>
<dbReference type="Pfam" id="PF08544">
    <property type="entry name" value="GHMP_kinases_C"/>
    <property type="match status" value="1"/>
</dbReference>
<dbReference type="Pfam" id="PF00288">
    <property type="entry name" value="GHMP_kinases_N"/>
    <property type="match status" value="1"/>
</dbReference>
<dbReference type="PIRSF" id="PIRSF010376">
    <property type="entry name" value="IspE"/>
    <property type="match status" value="1"/>
</dbReference>
<dbReference type="SUPFAM" id="SSF55060">
    <property type="entry name" value="GHMP Kinase, C-terminal domain"/>
    <property type="match status" value="1"/>
</dbReference>
<dbReference type="SUPFAM" id="SSF54211">
    <property type="entry name" value="Ribosomal protein S5 domain 2-like"/>
    <property type="match status" value="1"/>
</dbReference>
<name>ISPE_BURP0</name>
<comment type="function">
    <text evidence="1">Catalyzes the phosphorylation of the position 2 hydroxy group of 4-diphosphocytidyl-2C-methyl-D-erythritol.</text>
</comment>
<comment type="catalytic activity">
    <reaction evidence="1">
        <text>4-CDP-2-C-methyl-D-erythritol + ATP = 4-CDP-2-C-methyl-D-erythritol 2-phosphate + ADP + H(+)</text>
        <dbReference type="Rhea" id="RHEA:18437"/>
        <dbReference type="ChEBI" id="CHEBI:15378"/>
        <dbReference type="ChEBI" id="CHEBI:30616"/>
        <dbReference type="ChEBI" id="CHEBI:57823"/>
        <dbReference type="ChEBI" id="CHEBI:57919"/>
        <dbReference type="ChEBI" id="CHEBI:456216"/>
        <dbReference type="EC" id="2.7.1.148"/>
    </reaction>
</comment>
<comment type="pathway">
    <text evidence="1">Isoprenoid biosynthesis; isopentenyl diphosphate biosynthesis via DXP pathway; isopentenyl diphosphate from 1-deoxy-D-xylulose 5-phosphate: step 3/6.</text>
</comment>
<comment type="similarity">
    <text evidence="1">Belongs to the GHMP kinase family. IspE subfamily.</text>
</comment>